<keyword id="KW-0963">Cytoplasm</keyword>
<keyword id="KW-0444">Lipid biosynthesis</keyword>
<keyword id="KW-0443">Lipid metabolism</keyword>
<keyword id="KW-0520">NAD</keyword>
<keyword id="KW-0521">NADP</keyword>
<keyword id="KW-0547">Nucleotide-binding</keyword>
<keyword id="KW-0560">Oxidoreductase</keyword>
<keyword id="KW-0594">Phospholipid biosynthesis</keyword>
<keyword id="KW-1208">Phospholipid metabolism</keyword>
<keyword id="KW-1185">Reference proteome</keyword>
<protein>
    <recommendedName>
        <fullName evidence="1">Glycerol-3-phosphate dehydrogenase [NAD(P)+]</fullName>
        <ecNumber evidence="1">1.1.1.94</ecNumber>
    </recommendedName>
    <alternativeName>
        <fullName evidence="1">NAD(P)(+)-dependent glycerol-3-phosphate dehydrogenase</fullName>
    </alternativeName>
    <alternativeName>
        <fullName evidence="1">NAD(P)H-dependent dihydroxyacetone-phosphate reductase</fullName>
    </alternativeName>
</protein>
<accession>B2VL53</accession>
<name>GPDA_ERWT9</name>
<organism>
    <name type="scientific">Erwinia tasmaniensis (strain DSM 17950 / CFBP 7177 / CIP 109463 / NCPPB 4357 / Et1/99)</name>
    <dbReference type="NCBI Taxonomy" id="465817"/>
    <lineage>
        <taxon>Bacteria</taxon>
        <taxon>Pseudomonadati</taxon>
        <taxon>Pseudomonadota</taxon>
        <taxon>Gammaproteobacteria</taxon>
        <taxon>Enterobacterales</taxon>
        <taxon>Erwiniaceae</taxon>
        <taxon>Erwinia</taxon>
    </lineage>
</organism>
<dbReference type="EC" id="1.1.1.94" evidence="1"/>
<dbReference type="EMBL" id="CU468135">
    <property type="protein sequence ID" value="CAO95137.1"/>
    <property type="molecule type" value="Genomic_DNA"/>
</dbReference>
<dbReference type="RefSeq" id="WP_012439863.1">
    <property type="nucleotide sequence ID" value="NC_010694.1"/>
</dbReference>
<dbReference type="SMR" id="B2VL53"/>
<dbReference type="STRING" id="465817.ETA_00910"/>
<dbReference type="KEGG" id="eta:ETA_00910"/>
<dbReference type="eggNOG" id="COG0240">
    <property type="taxonomic scope" value="Bacteria"/>
</dbReference>
<dbReference type="HOGENOM" id="CLU_033449_0_2_6"/>
<dbReference type="OrthoDB" id="9812273at2"/>
<dbReference type="UniPathway" id="UPA00940"/>
<dbReference type="Proteomes" id="UP000001726">
    <property type="component" value="Chromosome"/>
</dbReference>
<dbReference type="GO" id="GO:0005829">
    <property type="term" value="C:cytosol"/>
    <property type="evidence" value="ECO:0007669"/>
    <property type="project" value="TreeGrafter"/>
</dbReference>
<dbReference type="GO" id="GO:0047952">
    <property type="term" value="F:glycerol-3-phosphate dehydrogenase [NAD(P)+] activity"/>
    <property type="evidence" value="ECO:0007669"/>
    <property type="project" value="UniProtKB-UniRule"/>
</dbReference>
<dbReference type="GO" id="GO:0051287">
    <property type="term" value="F:NAD binding"/>
    <property type="evidence" value="ECO:0007669"/>
    <property type="project" value="InterPro"/>
</dbReference>
<dbReference type="GO" id="GO:0005975">
    <property type="term" value="P:carbohydrate metabolic process"/>
    <property type="evidence" value="ECO:0007669"/>
    <property type="project" value="InterPro"/>
</dbReference>
<dbReference type="GO" id="GO:0046167">
    <property type="term" value="P:glycerol-3-phosphate biosynthetic process"/>
    <property type="evidence" value="ECO:0007669"/>
    <property type="project" value="UniProtKB-UniRule"/>
</dbReference>
<dbReference type="GO" id="GO:0046168">
    <property type="term" value="P:glycerol-3-phosphate catabolic process"/>
    <property type="evidence" value="ECO:0007669"/>
    <property type="project" value="InterPro"/>
</dbReference>
<dbReference type="GO" id="GO:0046474">
    <property type="term" value="P:glycerophospholipid biosynthetic process"/>
    <property type="evidence" value="ECO:0007669"/>
    <property type="project" value="TreeGrafter"/>
</dbReference>
<dbReference type="FunFam" id="1.10.1040.10:FF:000001">
    <property type="entry name" value="Glycerol-3-phosphate dehydrogenase [NAD(P)+]"/>
    <property type="match status" value="1"/>
</dbReference>
<dbReference type="FunFam" id="3.40.50.720:FF:000019">
    <property type="entry name" value="Glycerol-3-phosphate dehydrogenase [NAD(P)+]"/>
    <property type="match status" value="1"/>
</dbReference>
<dbReference type="Gene3D" id="1.10.1040.10">
    <property type="entry name" value="N-(1-d-carboxylethyl)-l-norvaline Dehydrogenase, domain 2"/>
    <property type="match status" value="1"/>
</dbReference>
<dbReference type="Gene3D" id="3.40.50.720">
    <property type="entry name" value="NAD(P)-binding Rossmann-like Domain"/>
    <property type="match status" value="1"/>
</dbReference>
<dbReference type="HAMAP" id="MF_00394">
    <property type="entry name" value="NAD_Glyc3P_dehydrog"/>
    <property type="match status" value="1"/>
</dbReference>
<dbReference type="InterPro" id="IPR008927">
    <property type="entry name" value="6-PGluconate_DH-like_C_sf"/>
</dbReference>
<dbReference type="InterPro" id="IPR013328">
    <property type="entry name" value="6PGD_dom2"/>
</dbReference>
<dbReference type="InterPro" id="IPR006168">
    <property type="entry name" value="G3P_DH_NAD-dep"/>
</dbReference>
<dbReference type="InterPro" id="IPR006109">
    <property type="entry name" value="G3P_DH_NAD-dep_C"/>
</dbReference>
<dbReference type="InterPro" id="IPR011128">
    <property type="entry name" value="G3P_DH_NAD-dep_N"/>
</dbReference>
<dbReference type="InterPro" id="IPR036291">
    <property type="entry name" value="NAD(P)-bd_dom_sf"/>
</dbReference>
<dbReference type="NCBIfam" id="NF000939">
    <property type="entry name" value="PRK00094.1-1"/>
    <property type="match status" value="1"/>
</dbReference>
<dbReference type="NCBIfam" id="NF000940">
    <property type="entry name" value="PRK00094.1-2"/>
    <property type="match status" value="1"/>
</dbReference>
<dbReference type="NCBIfam" id="NF000942">
    <property type="entry name" value="PRK00094.1-4"/>
    <property type="match status" value="1"/>
</dbReference>
<dbReference type="PANTHER" id="PTHR11728">
    <property type="entry name" value="GLYCEROL-3-PHOSPHATE DEHYDROGENASE"/>
    <property type="match status" value="1"/>
</dbReference>
<dbReference type="PANTHER" id="PTHR11728:SF1">
    <property type="entry name" value="GLYCEROL-3-PHOSPHATE DEHYDROGENASE [NAD(+)] 2, CHLOROPLASTIC"/>
    <property type="match status" value="1"/>
</dbReference>
<dbReference type="Pfam" id="PF07479">
    <property type="entry name" value="NAD_Gly3P_dh_C"/>
    <property type="match status" value="1"/>
</dbReference>
<dbReference type="Pfam" id="PF01210">
    <property type="entry name" value="NAD_Gly3P_dh_N"/>
    <property type="match status" value="1"/>
</dbReference>
<dbReference type="PIRSF" id="PIRSF000114">
    <property type="entry name" value="Glycerol-3-P_dh"/>
    <property type="match status" value="1"/>
</dbReference>
<dbReference type="PRINTS" id="PR00077">
    <property type="entry name" value="GPDHDRGNASE"/>
</dbReference>
<dbReference type="SUPFAM" id="SSF48179">
    <property type="entry name" value="6-phosphogluconate dehydrogenase C-terminal domain-like"/>
    <property type="match status" value="1"/>
</dbReference>
<dbReference type="SUPFAM" id="SSF51735">
    <property type="entry name" value="NAD(P)-binding Rossmann-fold domains"/>
    <property type="match status" value="1"/>
</dbReference>
<dbReference type="PROSITE" id="PS00957">
    <property type="entry name" value="NAD_G3PDH"/>
    <property type="match status" value="1"/>
</dbReference>
<gene>
    <name evidence="1" type="primary">gpsA</name>
    <name type="ordered locus">ETA_00910</name>
</gene>
<proteinExistence type="inferred from homology"/>
<reference key="1">
    <citation type="journal article" date="2008" name="Environ. Microbiol.">
        <title>The genome of Erwinia tasmaniensis strain Et1/99, a non-pathogenic bacterium in the genus Erwinia.</title>
        <authorList>
            <person name="Kube M."/>
            <person name="Migdoll A.M."/>
            <person name="Mueller I."/>
            <person name="Kuhl H."/>
            <person name="Beck A."/>
            <person name="Reinhardt R."/>
            <person name="Geider K."/>
        </authorList>
    </citation>
    <scope>NUCLEOTIDE SEQUENCE [LARGE SCALE GENOMIC DNA]</scope>
    <source>
        <strain>DSM 17950 / CFBP 7177 / CIP 109463 / NCPPB 4357 / Et1/99</strain>
    </source>
</reference>
<feature type="chain" id="PRO_1000190138" description="Glycerol-3-phosphate dehydrogenase [NAD(P)+]">
    <location>
        <begin position="1"/>
        <end position="339"/>
    </location>
</feature>
<feature type="active site" description="Proton acceptor" evidence="1">
    <location>
        <position position="195"/>
    </location>
</feature>
<feature type="binding site" evidence="1">
    <location>
        <position position="15"/>
    </location>
    <ligand>
        <name>NADPH</name>
        <dbReference type="ChEBI" id="CHEBI:57783"/>
    </ligand>
</feature>
<feature type="binding site" evidence="1">
    <location>
        <position position="16"/>
    </location>
    <ligand>
        <name>NADPH</name>
        <dbReference type="ChEBI" id="CHEBI:57783"/>
    </ligand>
</feature>
<feature type="binding site" evidence="1">
    <location>
        <position position="36"/>
    </location>
    <ligand>
        <name>NADPH</name>
        <dbReference type="ChEBI" id="CHEBI:57783"/>
    </ligand>
</feature>
<feature type="binding site" evidence="1">
    <location>
        <position position="110"/>
    </location>
    <ligand>
        <name>NADPH</name>
        <dbReference type="ChEBI" id="CHEBI:57783"/>
    </ligand>
</feature>
<feature type="binding site" evidence="1">
    <location>
        <position position="110"/>
    </location>
    <ligand>
        <name>sn-glycerol 3-phosphate</name>
        <dbReference type="ChEBI" id="CHEBI:57597"/>
    </ligand>
</feature>
<feature type="binding site" evidence="1">
    <location>
        <position position="139"/>
    </location>
    <ligand>
        <name>sn-glycerol 3-phosphate</name>
        <dbReference type="ChEBI" id="CHEBI:57597"/>
    </ligand>
</feature>
<feature type="binding site" evidence="1">
    <location>
        <position position="141"/>
    </location>
    <ligand>
        <name>sn-glycerol 3-phosphate</name>
        <dbReference type="ChEBI" id="CHEBI:57597"/>
    </ligand>
</feature>
<feature type="binding site" evidence="1">
    <location>
        <position position="143"/>
    </location>
    <ligand>
        <name>NADPH</name>
        <dbReference type="ChEBI" id="CHEBI:57783"/>
    </ligand>
</feature>
<feature type="binding site" evidence="1">
    <location>
        <position position="195"/>
    </location>
    <ligand>
        <name>sn-glycerol 3-phosphate</name>
        <dbReference type="ChEBI" id="CHEBI:57597"/>
    </ligand>
</feature>
<feature type="binding site" evidence="1">
    <location>
        <position position="248"/>
    </location>
    <ligand>
        <name>sn-glycerol 3-phosphate</name>
        <dbReference type="ChEBI" id="CHEBI:57597"/>
    </ligand>
</feature>
<feature type="binding site" evidence="1">
    <location>
        <position position="258"/>
    </location>
    <ligand>
        <name>sn-glycerol 3-phosphate</name>
        <dbReference type="ChEBI" id="CHEBI:57597"/>
    </ligand>
</feature>
<feature type="binding site" evidence="1">
    <location>
        <position position="259"/>
    </location>
    <ligand>
        <name>NADPH</name>
        <dbReference type="ChEBI" id="CHEBI:57783"/>
    </ligand>
</feature>
<feature type="binding site" evidence="1">
    <location>
        <position position="259"/>
    </location>
    <ligand>
        <name>sn-glycerol 3-phosphate</name>
        <dbReference type="ChEBI" id="CHEBI:57597"/>
    </ligand>
</feature>
<feature type="binding site" evidence="1">
    <location>
        <position position="260"/>
    </location>
    <ligand>
        <name>sn-glycerol 3-phosphate</name>
        <dbReference type="ChEBI" id="CHEBI:57597"/>
    </ligand>
</feature>
<feature type="binding site" evidence="1">
    <location>
        <position position="283"/>
    </location>
    <ligand>
        <name>NADPH</name>
        <dbReference type="ChEBI" id="CHEBI:57783"/>
    </ligand>
</feature>
<feature type="binding site" evidence="1">
    <location>
        <position position="285"/>
    </location>
    <ligand>
        <name>NADPH</name>
        <dbReference type="ChEBI" id="CHEBI:57783"/>
    </ligand>
</feature>
<sequence length="339" mass="35983">MRSAYAAMSVIGAGSYGTALAITLARNGHEVVLWGHNPQHQAQLQADRCHQAFLPDVPFPDTLIVESDLASAITASRDVLVVVPSHVFGDVLQQIKPHLRADSRLVWATKGLEKETGRLLQDVARETLGESIPLAVISGPTFAKELAAGLPTAIALAATDGVFAEDLQQLLHCGKSFRVYNNPDFIGVQLGGAVKNVIAIGAGISDGIGFGANARTALITRGLAEMSRLGAALGADPATFMGMAGLGDLVLTCTDNQSRNRRFGMMLGQGFDVEGAQDAIGQVVEGFRNTKEVKVLAERYAVEMPITEQIYQVLYCGKNTRDAALSLLGRSRKDENNGG</sequence>
<evidence type="ECO:0000255" key="1">
    <source>
        <dbReference type="HAMAP-Rule" id="MF_00394"/>
    </source>
</evidence>
<comment type="function">
    <text evidence="1">Catalyzes the reduction of the glycolytic intermediate dihydroxyacetone phosphate (DHAP) to sn-glycerol 3-phosphate (G3P), the key precursor for phospholipid synthesis.</text>
</comment>
<comment type="catalytic activity">
    <reaction evidence="1">
        <text>sn-glycerol 3-phosphate + NAD(+) = dihydroxyacetone phosphate + NADH + H(+)</text>
        <dbReference type="Rhea" id="RHEA:11092"/>
        <dbReference type="ChEBI" id="CHEBI:15378"/>
        <dbReference type="ChEBI" id="CHEBI:57540"/>
        <dbReference type="ChEBI" id="CHEBI:57597"/>
        <dbReference type="ChEBI" id="CHEBI:57642"/>
        <dbReference type="ChEBI" id="CHEBI:57945"/>
        <dbReference type="EC" id="1.1.1.94"/>
    </reaction>
    <physiologicalReaction direction="right-to-left" evidence="1">
        <dbReference type="Rhea" id="RHEA:11094"/>
    </physiologicalReaction>
</comment>
<comment type="catalytic activity">
    <reaction evidence="1">
        <text>sn-glycerol 3-phosphate + NADP(+) = dihydroxyacetone phosphate + NADPH + H(+)</text>
        <dbReference type="Rhea" id="RHEA:11096"/>
        <dbReference type="ChEBI" id="CHEBI:15378"/>
        <dbReference type="ChEBI" id="CHEBI:57597"/>
        <dbReference type="ChEBI" id="CHEBI:57642"/>
        <dbReference type="ChEBI" id="CHEBI:57783"/>
        <dbReference type="ChEBI" id="CHEBI:58349"/>
        <dbReference type="EC" id="1.1.1.94"/>
    </reaction>
    <physiologicalReaction direction="right-to-left" evidence="1">
        <dbReference type="Rhea" id="RHEA:11098"/>
    </physiologicalReaction>
</comment>
<comment type="pathway">
    <text evidence="1">Membrane lipid metabolism; glycerophospholipid metabolism.</text>
</comment>
<comment type="subcellular location">
    <subcellularLocation>
        <location evidence="1">Cytoplasm</location>
    </subcellularLocation>
</comment>
<comment type="similarity">
    <text evidence="1">Belongs to the NAD-dependent glycerol-3-phosphate dehydrogenase family.</text>
</comment>